<name>ATPB_BACFR</name>
<feature type="chain" id="PRO_0000144419" description="ATP synthase subunit beta">
    <location>
        <begin position="1"/>
        <end position="505"/>
    </location>
</feature>
<feature type="binding site" evidence="1">
    <location>
        <begin position="157"/>
        <end position="164"/>
    </location>
    <ligand>
        <name>ATP</name>
        <dbReference type="ChEBI" id="CHEBI:30616"/>
    </ligand>
</feature>
<feature type="sequence conflict" description="In Ref. 1; AAA22901." evidence="2" ref="1">
    <original>G</original>
    <variation>E</variation>
    <location>
        <position position="80"/>
    </location>
</feature>
<feature type="sequence conflict" description="In Ref. 1; AAA22901." evidence="2" ref="1">
    <original>K</original>
    <variation>Q</variation>
    <location>
        <position position="468"/>
    </location>
</feature>
<comment type="function">
    <text evidence="1">Produces ATP from ADP in the presence of a proton gradient across the membrane. The catalytic sites are hosted primarily by the beta subunits.</text>
</comment>
<comment type="catalytic activity">
    <reaction evidence="1">
        <text>ATP + H2O + 4 H(+)(in) = ADP + phosphate + 5 H(+)(out)</text>
        <dbReference type="Rhea" id="RHEA:57720"/>
        <dbReference type="ChEBI" id="CHEBI:15377"/>
        <dbReference type="ChEBI" id="CHEBI:15378"/>
        <dbReference type="ChEBI" id="CHEBI:30616"/>
        <dbReference type="ChEBI" id="CHEBI:43474"/>
        <dbReference type="ChEBI" id="CHEBI:456216"/>
        <dbReference type="EC" id="7.1.2.2"/>
    </reaction>
</comment>
<comment type="subunit">
    <text evidence="1">F-type ATPases have 2 components, CF(1) - the catalytic core - and CF(0) - the membrane proton channel. CF(1) has five subunits: alpha(3), beta(3), gamma(1), delta(1), epsilon(1). CF(0) has three main subunits: a(1), b(2) and c(9-12). The alpha and beta chains form an alternating ring which encloses part of the gamma chain. CF(1) is attached to CF(0) by a central stalk formed by the gamma and epsilon chains, while a peripheral stalk is formed by the delta and b chains.</text>
</comment>
<comment type="subcellular location">
    <subcellularLocation>
        <location evidence="1">Cell inner membrane</location>
        <topology evidence="1">Peripheral membrane protein</topology>
    </subcellularLocation>
</comment>
<comment type="similarity">
    <text evidence="1">Belongs to the ATPase alpha/beta chains family.</text>
</comment>
<gene>
    <name evidence="1" type="primary">atpD</name>
    <name type="ordered locus">BF2171</name>
</gene>
<keyword id="KW-0066">ATP synthesis</keyword>
<keyword id="KW-0067">ATP-binding</keyword>
<keyword id="KW-0997">Cell inner membrane</keyword>
<keyword id="KW-1003">Cell membrane</keyword>
<keyword id="KW-0139">CF(1)</keyword>
<keyword id="KW-0375">Hydrogen ion transport</keyword>
<keyword id="KW-0406">Ion transport</keyword>
<keyword id="KW-0472">Membrane</keyword>
<keyword id="KW-0547">Nucleotide-binding</keyword>
<keyword id="KW-1278">Translocase</keyword>
<keyword id="KW-0813">Transport</keyword>
<protein>
    <recommendedName>
        <fullName evidence="1">ATP synthase subunit beta</fullName>
        <ecNumber evidence="1">7.1.2.2</ecNumber>
    </recommendedName>
    <alternativeName>
        <fullName evidence="1">ATP synthase F1 sector subunit beta</fullName>
    </alternativeName>
    <alternativeName>
        <fullName evidence="1">F-ATPase subunit beta</fullName>
    </alternativeName>
</protein>
<sequence length="505" mass="55261">MSQIIGHISQVIGPVVDVYFEGTESDLILPSIHDALEIKRHNGKKLIVEVQQHIGENTVRTVAMDSTDGLQRGMKVFPTGGPITMPVGEQIKGRLMNVVGDSIDGMKELNRDGAYSIHRDPPKFEDLTTVQEVLFTGIKVIDLLEPYSKGGKIGLFGGAGVGKTVLIMELINNIAKKHNGFSVFAGVGERTREGNDLLREMIESGVIRYGEAFKESMEKGHWDLSKVDYNEVEKSQATLVFGQMNEPPGARASVALSGLTVAESFRDMGAKSGARDILFFIDNIFRFTQAGSEVSALLGRMPSAVGYQPTLATEMGAMQERITSTKTGSITSVQAVYVPADDLTDPAPATTFTHLDATTVLSRKITELGIYPAVDPLESTSRILDPHIVGQEHYDVAQRVKQILQRNKELQDIISILGMEELSDADRLVVNRARRVQRFLSQPFTVAEQFTGVPGAMVAIEDTIKGFKMILDGEVDYLPEPAFLNVGTIEEAIEKGKKLLEQANK</sequence>
<accession>P13356</accession>
<accession>Q64UB1</accession>
<proteinExistence type="inferred from homology"/>
<evidence type="ECO:0000255" key="1">
    <source>
        <dbReference type="HAMAP-Rule" id="MF_01347"/>
    </source>
</evidence>
<evidence type="ECO:0000305" key="2"/>
<dbReference type="EC" id="7.1.2.2" evidence="1"/>
<dbReference type="EMBL" id="M22247">
    <property type="protein sequence ID" value="AAA22901.1"/>
    <property type="molecule type" value="Genomic_DNA"/>
</dbReference>
<dbReference type="EMBL" id="AP006841">
    <property type="protein sequence ID" value="BAD48918.1"/>
    <property type="molecule type" value="Genomic_DNA"/>
</dbReference>
<dbReference type="PIR" id="A46570">
    <property type="entry name" value="A46570"/>
</dbReference>
<dbReference type="RefSeq" id="WP_005787476.1">
    <property type="nucleotide sequence ID" value="NC_006347.1"/>
</dbReference>
<dbReference type="RefSeq" id="YP_099452.1">
    <property type="nucleotide sequence ID" value="NC_006347.1"/>
</dbReference>
<dbReference type="SMR" id="P13356"/>
<dbReference type="STRING" id="295405.BF2171"/>
<dbReference type="GeneID" id="60369781"/>
<dbReference type="KEGG" id="bfr:BF2171"/>
<dbReference type="PATRIC" id="fig|295405.11.peg.2108"/>
<dbReference type="HOGENOM" id="CLU_022398_0_2_10"/>
<dbReference type="OrthoDB" id="9801639at2"/>
<dbReference type="Proteomes" id="UP000002197">
    <property type="component" value="Chromosome"/>
</dbReference>
<dbReference type="GO" id="GO:0005886">
    <property type="term" value="C:plasma membrane"/>
    <property type="evidence" value="ECO:0007669"/>
    <property type="project" value="UniProtKB-SubCell"/>
</dbReference>
<dbReference type="GO" id="GO:0045259">
    <property type="term" value="C:proton-transporting ATP synthase complex"/>
    <property type="evidence" value="ECO:0007669"/>
    <property type="project" value="UniProtKB-KW"/>
</dbReference>
<dbReference type="GO" id="GO:0005524">
    <property type="term" value="F:ATP binding"/>
    <property type="evidence" value="ECO:0007669"/>
    <property type="project" value="UniProtKB-UniRule"/>
</dbReference>
<dbReference type="GO" id="GO:0016887">
    <property type="term" value="F:ATP hydrolysis activity"/>
    <property type="evidence" value="ECO:0007669"/>
    <property type="project" value="InterPro"/>
</dbReference>
<dbReference type="GO" id="GO:0046933">
    <property type="term" value="F:proton-transporting ATP synthase activity, rotational mechanism"/>
    <property type="evidence" value="ECO:0007669"/>
    <property type="project" value="UniProtKB-UniRule"/>
</dbReference>
<dbReference type="CDD" id="cd18110">
    <property type="entry name" value="ATP-synt_F1_beta_C"/>
    <property type="match status" value="1"/>
</dbReference>
<dbReference type="CDD" id="cd18115">
    <property type="entry name" value="ATP-synt_F1_beta_N"/>
    <property type="match status" value="1"/>
</dbReference>
<dbReference type="CDD" id="cd01133">
    <property type="entry name" value="F1-ATPase_beta_CD"/>
    <property type="match status" value="1"/>
</dbReference>
<dbReference type="FunFam" id="1.10.1140.10:FF:000001">
    <property type="entry name" value="ATP synthase subunit beta"/>
    <property type="match status" value="1"/>
</dbReference>
<dbReference type="FunFam" id="2.40.10.170:FF:000011">
    <property type="entry name" value="ATP synthase subunit beta"/>
    <property type="match status" value="1"/>
</dbReference>
<dbReference type="FunFam" id="3.40.50.300:FF:000004">
    <property type="entry name" value="ATP synthase subunit beta"/>
    <property type="match status" value="1"/>
</dbReference>
<dbReference type="Gene3D" id="2.40.10.170">
    <property type="match status" value="1"/>
</dbReference>
<dbReference type="Gene3D" id="1.10.1140.10">
    <property type="entry name" value="Bovine Mitochondrial F1-atpase, Atp Synthase Beta Chain, Chain D, domain 3"/>
    <property type="match status" value="1"/>
</dbReference>
<dbReference type="Gene3D" id="3.40.50.300">
    <property type="entry name" value="P-loop containing nucleotide triphosphate hydrolases"/>
    <property type="match status" value="1"/>
</dbReference>
<dbReference type="HAMAP" id="MF_01347">
    <property type="entry name" value="ATP_synth_beta_bact"/>
    <property type="match status" value="1"/>
</dbReference>
<dbReference type="InterPro" id="IPR003593">
    <property type="entry name" value="AAA+_ATPase"/>
</dbReference>
<dbReference type="InterPro" id="IPR055190">
    <property type="entry name" value="ATP-synt_VA_C"/>
</dbReference>
<dbReference type="InterPro" id="IPR005722">
    <property type="entry name" value="ATP_synth_F1_bsu"/>
</dbReference>
<dbReference type="InterPro" id="IPR020003">
    <property type="entry name" value="ATPase_a/bsu_AS"/>
</dbReference>
<dbReference type="InterPro" id="IPR050053">
    <property type="entry name" value="ATPase_alpha/beta_chains"/>
</dbReference>
<dbReference type="InterPro" id="IPR004100">
    <property type="entry name" value="ATPase_F1/V1/A1_a/bsu_N"/>
</dbReference>
<dbReference type="InterPro" id="IPR036121">
    <property type="entry name" value="ATPase_F1/V1/A1_a/bsu_N_sf"/>
</dbReference>
<dbReference type="InterPro" id="IPR000194">
    <property type="entry name" value="ATPase_F1/V1/A1_a/bsu_nucl-bd"/>
</dbReference>
<dbReference type="InterPro" id="IPR024034">
    <property type="entry name" value="ATPase_F1/V1_b/a_C"/>
</dbReference>
<dbReference type="InterPro" id="IPR027417">
    <property type="entry name" value="P-loop_NTPase"/>
</dbReference>
<dbReference type="NCBIfam" id="TIGR01039">
    <property type="entry name" value="atpD"/>
    <property type="match status" value="1"/>
</dbReference>
<dbReference type="PANTHER" id="PTHR15184">
    <property type="entry name" value="ATP SYNTHASE"/>
    <property type="match status" value="1"/>
</dbReference>
<dbReference type="PANTHER" id="PTHR15184:SF71">
    <property type="entry name" value="ATP SYNTHASE SUBUNIT BETA, MITOCHONDRIAL"/>
    <property type="match status" value="1"/>
</dbReference>
<dbReference type="Pfam" id="PF00006">
    <property type="entry name" value="ATP-synt_ab"/>
    <property type="match status" value="1"/>
</dbReference>
<dbReference type="Pfam" id="PF02874">
    <property type="entry name" value="ATP-synt_ab_N"/>
    <property type="match status" value="1"/>
</dbReference>
<dbReference type="Pfam" id="PF22919">
    <property type="entry name" value="ATP-synt_VA_C"/>
    <property type="match status" value="1"/>
</dbReference>
<dbReference type="SMART" id="SM00382">
    <property type="entry name" value="AAA"/>
    <property type="match status" value="1"/>
</dbReference>
<dbReference type="SUPFAM" id="SSF47917">
    <property type="entry name" value="C-terminal domain of alpha and beta subunits of F1 ATP synthase"/>
    <property type="match status" value="1"/>
</dbReference>
<dbReference type="SUPFAM" id="SSF50615">
    <property type="entry name" value="N-terminal domain of alpha and beta subunits of F1 ATP synthase"/>
    <property type="match status" value="1"/>
</dbReference>
<dbReference type="SUPFAM" id="SSF52540">
    <property type="entry name" value="P-loop containing nucleoside triphosphate hydrolases"/>
    <property type="match status" value="1"/>
</dbReference>
<dbReference type="PROSITE" id="PS00152">
    <property type="entry name" value="ATPASE_ALPHA_BETA"/>
    <property type="match status" value="1"/>
</dbReference>
<organism>
    <name type="scientific">Bacteroides fragilis (strain YCH46)</name>
    <dbReference type="NCBI Taxonomy" id="295405"/>
    <lineage>
        <taxon>Bacteria</taxon>
        <taxon>Pseudomonadati</taxon>
        <taxon>Bacteroidota</taxon>
        <taxon>Bacteroidia</taxon>
        <taxon>Bacteroidales</taxon>
        <taxon>Bacteroidaceae</taxon>
        <taxon>Bacteroides</taxon>
    </lineage>
</organism>
<reference key="1">
    <citation type="journal article" date="1988" name="J. Gen. Microbiol.">
        <title>Beta-subunit of ATP-synthase: a useful marker for studying the phylogenetic relationship of eubacteria.</title>
        <authorList>
            <person name="Amann R."/>
            <person name="Ludwig W."/>
            <person name="Schleifer K.H."/>
        </authorList>
    </citation>
    <scope>NUCLEOTIDE SEQUENCE [GENOMIC DNA]</scope>
</reference>
<reference key="2">
    <citation type="journal article" date="2004" name="Proc. Natl. Acad. Sci. U.S.A.">
        <title>Genomic analysis of Bacteroides fragilis reveals extensive DNA inversions regulating cell surface adaptation.</title>
        <authorList>
            <person name="Kuwahara T."/>
            <person name="Yamashita A."/>
            <person name="Hirakawa H."/>
            <person name="Nakayama H."/>
            <person name="Toh H."/>
            <person name="Okada N."/>
            <person name="Kuhara S."/>
            <person name="Hattori M."/>
            <person name="Hayashi T."/>
            <person name="Ohnishi Y."/>
        </authorList>
    </citation>
    <scope>NUCLEOTIDE SEQUENCE [LARGE SCALE GENOMIC DNA]</scope>
    <source>
        <strain>YCH46</strain>
    </source>
</reference>